<keyword id="KW-0025">Alternative splicing</keyword>
<keyword id="KW-0963">Cytoplasm</keyword>
<keyword id="KW-0344">Guanine-nucleotide releasing factor</keyword>
<keyword id="KW-0378">Hydrolase</keyword>
<keyword id="KW-0547">Nucleotide-binding</keyword>
<keyword id="KW-0548">Nucleotidyltransferase</keyword>
<keyword id="KW-1185">Reference proteome</keyword>
<keyword id="KW-0808">Transferase</keyword>
<accession>Q5ZR76</accession>
<accession>O16879</accession>
<reference key="1">
    <citation type="journal article" date="1998" name="Science">
        <title>Genome sequence of the nematode C. elegans: a platform for investigating biology.</title>
        <authorList>
            <consortium name="The C. elegans sequencing consortium"/>
        </authorList>
    </citation>
    <scope>NUCLEOTIDE SEQUENCE [LARGE SCALE GENOMIC DNA]</scope>
    <source>
        <strain>Bristol N2</strain>
    </source>
</reference>
<reference key="2">
    <citation type="journal article" date="2011" name="J. Biol. Chem.">
        <title>A novel GDP-D-glucose phosphorylase involved in quality control of the nucleoside diphosphate sugar pool in Caenorhabditis elegans and mammals.</title>
        <authorList>
            <person name="Adler L.N."/>
            <person name="Gomez T.A."/>
            <person name="Clarke S.G."/>
            <person name="Linster C.L."/>
        </authorList>
    </citation>
    <scope>FUNCTION</scope>
    <scope>CATALYTIC ACTIVITY</scope>
    <scope>BIOPHYSICOCHEMICAL PROPERTIES</scope>
    <scope>SUBCELLULAR LOCATION</scope>
    <scope>TISSUE SPECIFICITY</scope>
    <scope>DEVELOPMENTAL STAGE</scope>
</reference>
<comment type="function">
    <text evidence="4">Specific and highly efficient GDP-D-glucose phosphorylase regulating the levels of GDP-D-glucose in cells.</text>
</comment>
<comment type="catalytic activity">
    <reaction evidence="4">
        <text>GDP-alpha-D-glucose + phosphate = alpha-D-glucose 1-phosphate + GDP + H(+)</text>
        <dbReference type="Rhea" id="RHEA:30387"/>
        <dbReference type="ChEBI" id="CHEBI:15378"/>
        <dbReference type="ChEBI" id="CHEBI:43474"/>
        <dbReference type="ChEBI" id="CHEBI:58189"/>
        <dbReference type="ChEBI" id="CHEBI:58601"/>
        <dbReference type="ChEBI" id="CHEBI:62230"/>
        <dbReference type="EC" id="2.7.7.78"/>
    </reaction>
</comment>
<comment type="biophysicochemical properties">
    <kinetics>
        <KM evidence="4">10 uM for GDP-D-glucose (at 26 degrees Celsius)</KM>
        <KM evidence="4">11 uM for GDP-L-galactose (at 26 degrees Celsius)</KM>
        <KM evidence="4">330 uM for GDP-D-mannose (at 26 degrees Celsius)</KM>
        <KM evidence="4">1.2 mM for inorganic phosphate (at 26 degrees Celsius)</KM>
        <text>kcat is 265 sec(-1). The catalytic efficiency for GDP-D-glucose is 750-fold higher than for GDP-L-galactose.</text>
    </kinetics>
</comment>
<comment type="subcellular location">
    <subcellularLocation>
        <location evidence="4">Cytoplasm</location>
    </subcellularLocation>
</comment>
<comment type="alternative products">
    <event type="alternative splicing"/>
    <isoform>
        <id>Q5ZR76-1</id>
        <name evidence="7">b</name>
        <sequence type="displayed"/>
    </isoform>
    <isoform>
        <id>Q5ZR76-2</id>
        <name evidence="6">a</name>
        <sequence type="described" ref="VSP_041658"/>
    </isoform>
</comment>
<comment type="tissue specificity">
    <text evidence="4">Expressed throughout the neuronal system, in the spermatheca and anterior hypodermal cells.</text>
</comment>
<comment type="developmental stage">
    <text evidence="4">Expressed in all the normal larval stages observed.</text>
</comment>
<comment type="miscellaneous">
    <text>The orthologs in A.thaliana are GDP-L-galactose phosphorylases catalyzing the first reaction of the Smirnoff-Wheeler pathway, the major route to ascorbate biosynthesis in plants.</text>
</comment>
<comment type="similarity">
    <text evidence="5">Belongs to the GDPGP1 family.</text>
</comment>
<feature type="chain" id="PRO_0000412198" description="GDP-D-glucose phosphorylase 1">
    <location>
        <begin position="1"/>
        <end position="482"/>
    </location>
</feature>
<feature type="region of interest" description="Disordered" evidence="3">
    <location>
        <begin position="1"/>
        <end position="21"/>
    </location>
</feature>
<feature type="region of interest" description="Disordered" evidence="3">
    <location>
        <begin position="461"/>
        <end position="482"/>
    </location>
</feature>
<feature type="active site" description="Tele-GMP-histidine intermediate" evidence="1">
    <location>
        <position position="255"/>
    </location>
</feature>
<feature type="splice variant" id="VSP_041658" description="In isoform a." evidence="5">
    <location>
        <begin position="1"/>
        <end position="24"/>
    </location>
</feature>
<proteinExistence type="evidence at protein level"/>
<dbReference type="EC" id="2.7.7.78" evidence="4"/>
<dbReference type="EMBL" id="FO080493">
    <property type="protein sequence ID" value="CCD64123.1"/>
    <property type="molecule type" value="Genomic_DNA"/>
</dbReference>
<dbReference type="EMBL" id="FO080493">
    <property type="protein sequence ID" value="CCD64124.1"/>
    <property type="molecule type" value="Genomic_DNA"/>
</dbReference>
<dbReference type="PIR" id="T32151">
    <property type="entry name" value="T32151"/>
</dbReference>
<dbReference type="RefSeq" id="NP_001023638.1">
    <property type="nucleotide sequence ID" value="NM_001028467.3"/>
</dbReference>
<dbReference type="RefSeq" id="NP_001023639.1">
    <molecule id="Q5ZR76-1"/>
    <property type="nucleotide sequence ID" value="NM_001028468.4"/>
</dbReference>
<dbReference type="RefSeq" id="NP_001379651.1">
    <molecule id="Q5ZR76-2"/>
    <property type="nucleotide sequence ID" value="NM_001392523.1"/>
</dbReference>
<dbReference type="FunCoup" id="Q5ZR76">
    <property type="interactions" value="1490"/>
</dbReference>
<dbReference type="STRING" id="6239.C10F3.4b.1"/>
<dbReference type="PaxDb" id="6239-C10F3.4b"/>
<dbReference type="PeptideAtlas" id="Q5ZR76"/>
<dbReference type="EnsemblMetazoa" id="C10F3.4a.1">
    <molecule id="Q5ZR76-2"/>
    <property type="protein sequence ID" value="C10F3.4a.1"/>
    <property type="gene ID" value="WBGene00015678"/>
</dbReference>
<dbReference type="EnsemblMetazoa" id="C10F3.4a.2">
    <molecule id="Q5ZR76-2"/>
    <property type="protein sequence ID" value="C10F3.4a.2"/>
    <property type="gene ID" value="WBGene00015678"/>
</dbReference>
<dbReference type="EnsemblMetazoa" id="C10F3.4b.1">
    <molecule id="Q5ZR76-1"/>
    <property type="protein sequence ID" value="C10F3.4b.1"/>
    <property type="gene ID" value="WBGene00015678"/>
</dbReference>
<dbReference type="GeneID" id="178982"/>
<dbReference type="KEGG" id="cel:CELE_C10F3.4"/>
<dbReference type="UCSC" id="C10F3.4b">
    <property type="organism name" value="c. elegans"/>
</dbReference>
<dbReference type="AGR" id="WB:WBGene00015678"/>
<dbReference type="CTD" id="178982"/>
<dbReference type="WormBase" id="C10F3.4a">
    <molecule id="Q5ZR76-1"/>
    <property type="protein sequence ID" value="CE30723"/>
    <property type="gene ID" value="WBGene00015678"/>
    <property type="gene designation" value="mcp-1"/>
</dbReference>
<dbReference type="WormBase" id="C10F3.4b">
    <molecule id="Q5ZR76-2"/>
    <property type="protein sequence ID" value="CE37609"/>
    <property type="gene ID" value="WBGene00015678"/>
    <property type="gene designation" value="mcp-1"/>
</dbReference>
<dbReference type="eggNOG" id="KOG2720">
    <property type="taxonomic scope" value="Eukaryota"/>
</dbReference>
<dbReference type="GeneTree" id="ENSGT00390000016718"/>
<dbReference type="InParanoid" id="Q5ZR76"/>
<dbReference type="OMA" id="NNEDWDG"/>
<dbReference type="OrthoDB" id="417175at2759"/>
<dbReference type="PhylomeDB" id="Q5ZR76"/>
<dbReference type="BRENDA" id="2.7.7.78">
    <property type="organism ID" value="1045"/>
</dbReference>
<dbReference type="PRO" id="PR:Q5ZR76"/>
<dbReference type="Proteomes" id="UP000001940">
    <property type="component" value="Chromosome V"/>
</dbReference>
<dbReference type="Bgee" id="WBGene00015678">
    <property type="expression patterns" value="Expressed in pharyngeal muscle cell (C elegans) and 3 other cell types or tissues"/>
</dbReference>
<dbReference type="GO" id="GO:0005737">
    <property type="term" value="C:cytoplasm"/>
    <property type="evidence" value="ECO:0000314"/>
    <property type="project" value="WormBase"/>
</dbReference>
<dbReference type="GO" id="GO:0080048">
    <property type="term" value="F:GDP-D-glucose phosphorylase activity"/>
    <property type="evidence" value="ECO:0000314"/>
    <property type="project" value="UniProtKB"/>
</dbReference>
<dbReference type="GO" id="GO:0005085">
    <property type="term" value="F:guanyl-nucleotide exchange factor activity"/>
    <property type="evidence" value="ECO:0007669"/>
    <property type="project" value="UniProtKB-KW"/>
</dbReference>
<dbReference type="GO" id="GO:0016787">
    <property type="term" value="F:hydrolase activity"/>
    <property type="evidence" value="ECO:0007669"/>
    <property type="project" value="UniProtKB-KW"/>
</dbReference>
<dbReference type="GO" id="GO:0000166">
    <property type="term" value="F:nucleotide binding"/>
    <property type="evidence" value="ECO:0007669"/>
    <property type="project" value="UniProtKB-KW"/>
</dbReference>
<dbReference type="GO" id="GO:0006006">
    <property type="term" value="P:glucose metabolic process"/>
    <property type="evidence" value="ECO:0000314"/>
    <property type="project" value="WormBase"/>
</dbReference>
<dbReference type="InterPro" id="IPR026506">
    <property type="entry name" value="GDPGP"/>
</dbReference>
<dbReference type="PANTHER" id="PTHR20884">
    <property type="entry name" value="GDP-D-GLUCOSE PHOSPHORYLASE 1"/>
    <property type="match status" value="1"/>
</dbReference>
<dbReference type="PANTHER" id="PTHR20884:SF8">
    <property type="entry name" value="GDP-D-GLUCOSE PHOSPHORYLASE 1"/>
    <property type="match status" value="1"/>
</dbReference>
<sequence>MEPFPRILDDRLPRNMRRPRPIDKMPMRKIVMLGANARTQRSVSSIQLPAEYSPSASSAPYFNYSPDDFILDLRSHQSDEIYENGNSNHEKDEKKALKELLHERWENAKQYNAFNYPLNCMYRCLDGKYDLSMQLNIERGELRRKPMHFKNIKEPFNHLRFNFAKLHDHEILFYLKCDTDPISNDLLDRHLVAVNASPLERDHSLIVPSVNKCSPQVLTLQAVRIAVDLMLLVDDDMFHILFNSLLGQASVNHLHLHAMYWPYDSDLINRKCEPLHDVPNVYVIRPPVWICPAIVFQLDSLDNYEQFKMNIYKCVEHLTESNQAHNLFLARAQPIRTTGAEKEEDRRGERPQLVTCYVFPRMNMIGAKPPSNFNPAANELAGNLTSYTIRFFESANEQSVIRIIEEEASLDDDTFRSLCFDLADVLIGRSVGTSRPQDLDTLAGLTSPEIDELRDSFQSFMPRSPSIRHRSSTRAQSDEGSK</sequence>
<protein>
    <recommendedName>
        <fullName evidence="2">GDP-D-glucose phosphorylase 1</fullName>
        <ecNumber evidence="4">2.7.7.78</ecNumber>
    </recommendedName>
    <alternativeName>
        <fullName evidence="7">Metabolite control phosphorylase 1</fullName>
    </alternativeName>
</protein>
<name>GDPP1_CAEEL</name>
<evidence type="ECO:0000250" key="1"/>
<evidence type="ECO:0000250" key="2">
    <source>
        <dbReference type="UniProtKB" id="Q6ZNW5"/>
    </source>
</evidence>
<evidence type="ECO:0000256" key="3">
    <source>
        <dbReference type="SAM" id="MobiDB-lite"/>
    </source>
</evidence>
<evidence type="ECO:0000269" key="4">
    <source>
    </source>
</evidence>
<evidence type="ECO:0000305" key="5"/>
<evidence type="ECO:0000312" key="6">
    <source>
        <dbReference type="WormBase" id="C10F3.4a"/>
    </source>
</evidence>
<evidence type="ECO:0000312" key="7">
    <source>
        <dbReference type="WormBase" id="C10F3.4b"/>
    </source>
</evidence>
<organism>
    <name type="scientific">Caenorhabditis elegans</name>
    <dbReference type="NCBI Taxonomy" id="6239"/>
    <lineage>
        <taxon>Eukaryota</taxon>
        <taxon>Metazoa</taxon>
        <taxon>Ecdysozoa</taxon>
        <taxon>Nematoda</taxon>
        <taxon>Chromadorea</taxon>
        <taxon>Rhabditida</taxon>
        <taxon>Rhabditina</taxon>
        <taxon>Rhabditomorpha</taxon>
        <taxon>Rhabditoidea</taxon>
        <taxon>Rhabditidae</taxon>
        <taxon>Peloderinae</taxon>
        <taxon>Caenorhabditis</taxon>
    </lineage>
</organism>
<gene>
    <name evidence="7" type="primary">mcp-1</name>
    <name evidence="7" type="ORF">C10F3.4</name>
</gene>